<name>ATPF_ALKMQ</name>
<sequence length="168" mass="19691">MQGLVEFVLSNFIFTLINLWIMYWVLKKFLFKPTTEYMEGRKKSIADSIQEAEMKNKEADESKAQYDMKLQDIKKERSQIIDEATKRAEKRGDEIIKAAEDEAEKVIERAMTEIQREKQKSLNEMKNEISQLAIAAATKVIEKDLDEGTHHKMIQQFIDEVGETKWQN</sequence>
<comment type="function">
    <text evidence="1">F(1)F(0) ATP synthase produces ATP from ADP in the presence of a proton or sodium gradient. F-type ATPases consist of two structural domains, F(1) containing the extramembraneous catalytic core and F(0) containing the membrane proton channel, linked together by a central stalk and a peripheral stalk. During catalysis, ATP synthesis in the catalytic domain of F(1) is coupled via a rotary mechanism of the central stalk subunits to proton translocation.</text>
</comment>
<comment type="function">
    <text evidence="1">Component of the F(0) channel, it forms part of the peripheral stalk, linking F(1) to F(0).</text>
</comment>
<comment type="subunit">
    <text evidence="1">F-type ATPases have 2 components, F(1) - the catalytic core - and F(0) - the membrane proton channel. F(1) has five subunits: alpha(3), beta(3), gamma(1), delta(1), epsilon(1). F(0) has three main subunits: a(1), b(2) and c(10-14). The alpha and beta chains form an alternating ring which encloses part of the gamma chain. F(1) is attached to F(0) by a central stalk formed by the gamma and epsilon chains, while a peripheral stalk is formed by the delta and b chains.</text>
</comment>
<comment type="subcellular location">
    <subcellularLocation>
        <location evidence="1">Cell membrane</location>
        <topology evidence="1">Single-pass membrane protein</topology>
    </subcellularLocation>
</comment>
<comment type="similarity">
    <text evidence="1">Belongs to the ATPase B chain family.</text>
</comment>
<accession>A6TK61</accession>
<gene>
    <name evidence="1" type="primary">atpF</name>
    <name type="ordered locus">Amet_0349</name>
</gene>
<organism>
    <name type="scientific">Alkaliphilus metalliredigens (strain QYMF)</name>
    <dbReference type="NCBI Taxonomy" id="293826"/>
    <lineage>
        <taxon>Bacteria</taxon>
        <taxon>Bacillati</taxon>
        <taxon>Bacillota</taxon>
        <taxon>Clostridia</taxon>
        <taxon>Peptostreptococcales</taxon>
        <taxon>Natronincolaceae</taxon>
        <taxon>Alkaliphilus</taxon>
    </lineage>
</organism>
<proteinExistence type="inferred from homology"/>
<protein>
    <recommendedName>
        <fullName evidence="1">ATP synthase subunit b</fullName>
    </recommendedName>
    <alternativeName>
        <fullName evidence="1">ATP synthase F(0) sector subunit b</fullName>
    </alternativeName>
    <alternativeName>
        <fullName evidence="1">ATPase subunit I</fullName>
    </alternativeName>
    <alternativeName>
        <fullName evidence="1">F-type ATPase subunit b</fullName>
        <shortName evidence="1">F-ATPase subunit b</shortName>
    </alternativeName>
</protein>
<evidence type="ECO:0000255" key="1">
    <source>
        <dbReference type="HAMAP-Rule" id="MF_01398"/>
    </source>
</evidence>
<feature type="chain" id="PRO_0000368306" description="ATP synthase subunit b">
    <location>
        <begin position="1"/>
        <end position="168"/>
    </location>
</feature>
<feature type="transmembrane region" description="Helical" evidence="1">
    <location>
        <begin position="7"/>
        <end position="26"/>
    </location>
</feature>
<dbReference type="EMBL" id="CP000724">
    <property type="protein sequence ID" value="ABR46579.1"/>
    <property type="molecule type" value="Genomic_DNA"/>
</dbReference>
<dbReference type="RefSeq" id="WP_011971487.1">
    <property type="nucleotide sequence ID" value="NC_009633.1"/>
</dbReference>
<dbReference type="SMR" id="A6TK61"/>
<dbReference type="STRING" id="293826.Amet_0349"/>
<dbReference type="KEGG" id="amt:Amet_0349"/>
<dbReference type="eggNOG" id="COG0711">
    <property type="taxonomic scope" value="Bacteria"/>
</dbReference>
<dbReference type="HOGENOM" id="CLU_079215_4_0_9"/>
<dbReference type="OrthoDB" id="9795863at2"/>
<dbReference type="Proteomes" id="UP000001572">
    <property type="component" value="Chromosome"/>
</dbReference>
<dbReference type="GO" id="GO:0005886">
    <property type="term" value="C:plasma membrane"/>
    <property type="evidence" value="ECO:0007669"/>
    <property type="project" value="UniProtKB-SubCell"/>
</dbReference>
<dbReference type="GO" id="GO:0045259">
    <property type="term" value="C:proton-transporting ATP synthase complex"/>
    <property type="evidence" value="ECO:0007669"/>
    <property type="project" value="UniProtKB-KW"/>
</dbReference>
<dbReference type="GO" id="GO:0046933">
    <property type="term" value="F:proton-transporting ATP synthase activity, rotational mechanism"/>
    <property type="evidence" value="ECO:0007669"/>
    <property type="project" value="UniProtKB-UniRule"/>
</dbReference>
<dbReference type="GO" id="GO:0046961">
    <property type="term" value="F:proton-transporting ATPase activity, rotational mechanism"/>
    <property type="evidence" value="ECO:0007669"/>
    <property type="project" value="TreeGrafter"/>
</dbReference>
<dbReference type="CDD" id="cd06503">
    <property type="entry name" value="ATP-synt_Fo_b"/>
    <property type="match status" value="1"/>
</dbReference>
<dbReference type="Gene3D" id="6.10.250.1580">
    <property type="match status" value="1"/>
</dbReference>
<dbReference type="HAMAP" id="MF_01398">
    <property type="entry name" value="ATP_synth_b_bprime"/>
    <property type="match status" value="1"/>
</dbReference>
<dbReference type="InterPro" id="IPR028987">
    <property type="entry name" value="ATP_synth_B-like_membr_sf"/>
</dbReference>
<dbReference type="InterPro" id="IPR002146">
    <property type="entry name" value="ATP_synth_b/b'su_bac/chlpt"/>
</dbReference>
<dbReference type="InterPro" id="IPR005864">
    <property type="entry name" value="ATP_synth_F0_bsu_bac"/>
</dbReference>
<dbReference type="InterPro" id="IPR050059">
    <property type="entry name" value="ATP_synthase_B_chain"/>
</dbReference>
<dbReference type="NCBIfam" id="TIGR01144">
    <property type="entry name" value="ATP_synt_b"/>
    <property type="match status" value="1"/>
</dbReference>
<dbReference type="PANTHER" id="PTHR33445">
    <property type="entry name" value="ATP SYNTHASE SUBUNIT B', CHLOROPLASTIC"/>
    <property type="match status" value="1"/>
</dbReference>
<dbReference type="PANTHER" id="PTHR33445:SF2">
    <property type="entry name" value="ATP SYNTHASE SUBUNIT B', CHLOROPLASTIC"/>
    <property type="match status" value="1"/>
</dbReference>
<dbReference type="Pfam" id="PF00430">
    <property type="entry name" value="ATP-synt_B"/>
    <property type="match status" value="1"/>
</dbReference>
<dbReference type="SUPFAM" id="SSF81573">
    <property type="entry name" value="F1F0 ATP synthase subunit B, membrane domain"/>
    <property type="match status" value="1"/>
</dbReference>
<keyword id="KW-0066">ATP synthesis</keyword>
<keyword id="KW-1003">Cell membrane</keyword>
<keyword id="KW-0138">CF(0)</keyword>
<keyword id="KW-0375">Hydrogen ion transport</keyword>
<keyword id="KW-0406">Ion transport</keyword>
<keyword id="KW-0472">Membrane</keyword>
<keyword id="KW-1185">Reference proteome</keyword>
<keyword id="KW-0812">Transmembrane</keyword>
<keyword id="KW-1133">Transmembrane helix</keyword>
<keyword id="KW-0813">Transport</keyword>
<reference key="1">
    <citation type="journal article" date="2016" name="Genome Announc.">
        <title>Complete genome sequence of Alkaliphilus metalliredigens strain QYMF, an alkaliphilic and metal-reducing bacterium isolated from borax-contaminated leachate ponds.</title>
        <authorList>
            <person name="Hwang C."/>
            <person name="Copeland A."/>
            <person name="Lucas S."/>
            <person name="Lapidus A."/>
            <person name="Barry K."/>
            <person name="Detter J.C."/>
            <person name="Glavina Del Rio T."/>
            <person name="Hammon N."/>
            <person name="Israni S."/>
            <person name="Dalin E."/>
            <person name="Tice H."/>
            <person name="Pitluck S."/>
            <person name="Chertkov O."/>
            <person name="Brettin T."/>
            <person name="Bruce D."/>
            <person name="Han C."/>
            <person name="Schmutz J."/>
            <person name="Larimer F."/>
            <person name="Land M.L."/>
            <person name="Hauser L."/>
            <person name="Kyrpides N."/>
            <person name="Mikhailova N."/>
            <person name="Ye Q."/>
            <person name="Zhou J."/>
            <person name="Richardson P."/>
            <person name="Fields M.W."/>
        </authorList>
    </citation>
    <scope>NUCLEOTIDE SEQUENCE [LARGE SCALE GENOMIC DNA]</scope>
    <source>
        <strain>QYMF</strain>
    </source>
</reference>